<dbReference type="EC" id="1.3.2.3"/>
<dbReference type="EMBL" id="Z97060">
    <property type="protein sequence ID" value="CAB09796.1"/>
    <property type="molecule type" value="mRNA"/>
</dbReference>
<dbReference type="PIR" id="T14463">
    <property type="entry name" value="T14463"/>
</dbReference>
<dbReference type="SMR" id="O47881"/>
<dbReference type="KEGG" id="ag:CAB09796"/>
<dbReference type="BioCyc" id="MetaCyc:MONOMER-2307"/>
<dbReference type="BRENDA" id="1.3.2.3">
    <property type="organism ID" value="948"/>
</dbReference>
<dbReference type="SABIO-RK" id="O47881"/>
<dbReference type="UniPathway" id="UPA00132"/>
<dbReference type="GO" id="GO:0031966">
    <property type="term" value="C:mitochondrial membrane"/>
    <property type="evidence" value="ECO:0007669"/>
    <property type="project" value="UniProtKB-SubCell"/>
</dbReference>
<dbReference type="GO" id="GO:0003885">
    <property type="term" value="F:D-arabinono-1,4-lactone oxidase activity"/>
    <property type="evidence" value="ECO:0007669"/>
    <property type="project" value="InterPro"/>
</dbReference>
<dbReference type="GO" id="GO:0071949">
    <property type="term" value="F:FAD binding"/>
    <property type="evidence" value="ECO:0007669"/>
    <property type="project" value="InterPro"/>
</dbReference>
<dbReference type="GO" id="GO:0016633">
    <property type="term" value="F:galactonolactone dehydrogenase activity"/>
    <property type="evidence" value="ECO:0007669"/>
    <property type="project" value="UniProtKB-EC"/>
</dbReference>
<dbReference type="GO" id="GO:0080049">
    <property type="term" value="F:L-gulono-1,4-lactone dehydrogenase activity"/>
    <property type="evidence" value="ECO:0007669"/>
    <property type="project" value="EnsemblPlants"/>
</dbReference>
<dbReference type="GO" id="GO:0019853">
    <property type="term" value="P:L-ascorbic acid biosynthetic process"/>
    <property type="evidence" value="ECO:0007669"/>
    <property type="project" value="UniProtKB-UniPathway"/>
</dbReference>
<dbReference type="Gene3D" id="3.30.465.10">
    <property type="match status" value="1"/>
</dbReference>
<dbReference type="Gene3D" id="3.30.43.10">
    <property type="entry name" value="Uridine Diphospho-n-acetylenolpyruvylglucosamine Reductase, domain 2"/>
    <property type="match status" value="1"/>
</dbReference>
<dbReference type="InterPro" id="IPR007173">
    <property type="entry name" value="ALO_C"/>
</dbReference>
<dbReference type="InterPro" id="IPR016166">
    <property type="entry name" value="FAD-bd_PCMH"/>
</dbReference>
<dbReference type="InterPro" id="IPR036318">
    <property type="entry name" value="FAD-bd_PCMH-like_sf"/>
</dbReference>
<dbReference type="InterPro" id="IPR016167">
    <property type="entry name" value="FAD-bd_PCMH_sub1"/>
</dbReference>
<dbReference type="InterPro" id="IPR016169">
    <property type="entry name" value="FAD-bd_PCMH_sub2"/>
</dbReference>
<dbReference type="InterPro" id="IPR010031">
    <property type="entry name" value="FAD_lactone_oxidase-like"/>
</dbReference>
<dbReference type="InterPro" id="IPR010029">
    <property type="entry name" value="GL_DH"/>
</dbReference>
<dbReference type="InterPro" id="IPR006094">
    <property type="entry name" value="Oxid_FAD_bind_N"/>
</dbReference>
<dbReference type="NCBIfam" id="TIGR01676">
    <property type="entry name" value="GLDHase"/>
    <property type="match status" value="1"/>
</dbReference>
<dbReference type="PANTHER" id="PTHR43762:SF1">
    <property type="entry name" value="D-ARABINONO-1,4-LACTONE OXIDASE"/>
    <property type="match status" value="1"/>
</dbReference>
<dbReference type="PANTHER" id="PTHR43762">
    <property type="entry name" value="L-GULONOLACTONE OXIDASE"/>
    <property type="match status" value="1"/>
</dbReference>
<dbReference type="Pfam" id="PF04030">
    <property type="entry name" value="ALO"/>
    <property type="match status" value="1"/>
</dbReference>
<dbReference type="Pfam" id="PF01565">
    <property type="entry name" value="FAD_binding_4"/>
    <property type="match status" value="1"/>
</dbReference>
<dbReference type="PIRSF" id="PIRSF000136">
    <property type="entry name" value="LGO_GLO"/>
    <property type="match status" value="1"/>
</dbReference>
<dbReference type="SUPFAM" id="SSF56176">
    <property type="entry name" value="FAD-binding/transporter-associated domain-like"/>
    <property type="match status" value="1"/>
</dbReference>
<dbReference type="SUPFAM" id="SSF101447">
    <property type="entry name" value="Formin homology 2 domain (FH2 domain)"/>
    <property type="match status" value="1"/>
</dbReference>
<dbReference type="PROSITE" id="PS51387">
    <property type="entry name" value="FAD_PCMH"/>
    <property type="match status" value="1"/>
</dbReference>
<sequence length="600" mass="67830">MLRSLLLRRSNARSLRPPFPPLRTLCTSGQTLTPAPPPPPPPPPPISSSASEKEFRKYAGYAALALFSGAATYFSFPFPENAKHKKAQIFRYAPLPEDLHTVSNWSGTHEVQTRNFNQPETLADLEALVKEAHEKKNRIRPVGSGLSPNGIGLSRSGMVNLALMDKVLEVDKEKKRVRVQAGIRVQQLVDAIQEYGLTLQNFASIREQQIGGIIQVGAHGTGARLPPIDEQVIGMKLVTPAKGTIELSKDNDPELFHLARCGLGGLGVVAEVTLQCVERQELLEHTYVSTLEEIKKNHKKLLSTNKHVKYLYIPYTDTVVVVTCNPVSKWSGAPKDKPKYTTEEALKHVRDLYRESIVKYRVQDSSKKTPDSREPDINELSFTELRDKLIALDPLNDVHVGKVNQAEAEFWKKSEGYRVGWSDEILGFDCGGQQWVSETCFPAGTLAKPSMKDLEYIEQLKELIQKEAIPAPSPIEQRWTGRSKSPMSPAFSTAEEDIFSWVGIIMYLPTADPRQRKDITDEFFHYRHLTQAKLWDQYSAYEHWAKIEIPKDKEELEALQERLRKRFPVDAYNKARRELDPNRILSNNMVEKLFPVSKTA</sequence>
<keyword id="KW-0903">Direct protein sequencing</keyword>
<keyword id="KW-0472">Membrane</keyword>
<keyword id="KW-0496">Mitochondrion</keyword>
<keyword id="KW-0560">Oxidoreductase</keyword>
<keyword id="KW-0809">Transit peptide</keyword>
<keyword id="KW-0812">Transmembrane</keyword>
<keyword id="KW-1133">Transmembrane helix</keyword>
<name>GLDH_BRAOL</name>
<organism>
    <name type="scientific">Brassica oleracea</name>
    <name type="common">Wild cabbage</name>
    <dbReference type="NCBI Taxonomy" id="3712"/>
    <lineage>
        <taxon>Eukaryota</taxon>
        <taxon>Viridiplantae</taxon>
        <taxon>Streptophyta</taxon>
        <taxon>Embryophyta</taxon>
        <taxon>Tracheophyta</taxon>
        <taxon>Spermatophyta</taxon>
        <taxon>Magnoliopsida</taxon>
        <taxon>eudicotyledons</taxon>
        <taxon>Gunneridae</taxon>
        <taxon>Pentapetalae</taxon>
        <taxon>rosids</taxon>
        <taxon>malvids</taxon>
        <taxon>Brassicales</taxon>
        <taxon>Brassicaceae</taxon>
        <taxon>Brassiceae</taxon>
        <taxon>Brassica</taxon>
    </lineage>
</organism>
<reference key="1">
    <citation type="journal article" date="1997" name="J. Biol. Chem.">
        <title>Isolation of a cDNA coding for L-galactono-gamma-lactone dehydrogenase, an enzyme involved in the biosynthesis of ascorbic acid in plants. Purification, characterization, cDNA cloning, and expression in yeast.</title>
        <authorList>
            <person name="Oestergaard J."/>
            <person name="Persiau G."/>
            <person name="Davey M.W."/>
            <person name="Bauw G."/>
            <person name="Van Montagu M."/>
        </authorList>
    </citation>
    <scope>NUCLEOTIDE SEQUENCE [MRNA]</scope>
    <scope>PROTEIN SEQUENCE OF 92-104; 243-248; 340-347; 364-380; 389-401; 403-412; 479-482; 534-542 AND 547-551</scope>
    <scope>BIOPHYSICOCHEMICAL PROPERTIES</scope>
    <scope>ACTIVITY REGULATION</scope>
</reference>
<evidence type="ECO:0000255" key="1"/>
<evidence type="ECO:0000255" key="2">
    <source>
        <dbReference type="PROSITE-ProRule" id="PRU00718"/>
    </source>
</evidence>
<evidence type="ECO:0000256" key="3">
    <source>
        <dbReference type="SAM" id="MobiDB-lite"/>
    </source>
</evidence>
<evidence type="ECO:0000269" key="4">
    <source>
    </source>
</evidence>
<evidence type="ECO:0000305" key="5"/>
<comment type="function">
    <text>Involved in the biosynthesis of ascorbic acid. Uses L-galactono-1,4-lactone as substrate, but not L-gulono-1,4-lactone, D-galactono-1,4-lactone, D-gulono-1,4-lactone, D-erythronic-1,4-lactone, D-xylonic-1,4-lactone, L-mannono-1,4-lactone, D-galactonic acid, D-glucuronic acid or D-gluconic acid. FAD, NAD, NADP and O(2) cannot act as electron acceptor.</text>
</comment>
<comment type="catalytic activity">
    <reaction>
        <text>L-galactono-1,4-lactone + 4 Fe(III)-[cytochrome c] = L-dehydroascorbate + 4 Fe(II)-[cytochrome c] + 5 H(+)</text>
        <dbReference type="Rhea" id="RHEA:32367"/>
        <dbReference type="Rhea" id="RHEA-COMP:10350"/>
        <dbReference type="Rhea" id="RHEA-COMP:14399"/>
        <dbReference type="ChEBI" id="CHEBI:15378"/>
        <dbReference type="ChEBI" id="CHEBI:17464"/>
        <dbReference type="ChEBI" id="CHEBI:29033"/>
        <dbReference type="ChEBI" id="CHEBI:29034"/>
        <dbReference type="ChEBI" id="CHEBI:58539"/>
        <dbReference type="EC" id="1.3.2.3"/>
    </reaction>
</comment>
<comment type="cofactor">
    <cofactor evidence="5">
        <name>FAD</name>
        <dbReference type="ChEBI" id="CHEBI:57692"/>
    </cofactor>
</comment>
<comment type="activity regulation">
    <text evidence="4">Inhibited by sulfhydryl-modifying agents such as N-ethylmaleimide, monoiodoacetic acid and p-hydroxymercuribenzoic acid. No inhibition by riboflavin and lycorine.</text>
</comment>
<comment type="biophysicochemical properties">
    <kinetics>
        <KM evidence="4">3.3 mM for L-galactono-1,4-lactone</KM>
    </kinetics>
    <phDependence>
        <text evidence="4">Optimum pH is 8.0-8.5.</text>
    </phDependence>
</comment>
<comment type="pathway">
    <text>Cofactor biosynthesis; L-ascorbate biosynthesis.</text>
</comment>
<comment type="subcellular location">
    <subcellularLocation>
        <location evidence="5">Mitochondrion membrane</location>
        <topology evidence="5">Single-pass membrane protein</topology>
    </subcellularLocation>
</comment>
<comment type="domain">
    <text>The FAD-binding PCMH-type domain does not bind FAD covalently.</text>
</comment>
<protein>
    <recommendedName>
        <fullName>L-galactono-1,4-lactone dehydrogenase, mitochondrial</fullName>
        <ecNumber>1.3.2.3</ecNumber>
    </recommendedName>
</protein>
<feature type="transit peptide" description="Mitochondrion" evidence="1">
    <location>
        <begin position="1"/>
        <end position="25"/>
    </location>
</feature>
<feature type="propeptide" id="PRO_0000372083" description="Removed in mature form" evidence="4">
    <location>
        <begin position="26"/>
        <end position="91"/>
    </location>
</feature>
<feature type="chain" id="PRO_0000372084" description="L-galactono-1,4-lactone dehydrogenase, mitochondrial">
    <location>
        <begin position="92"/>
        <end position="600"/>
    </location>
</feature>
<feature type="transmembrane region" description="Helical" evidence="1">
    <location>
        <begin position="58"/>
        <end position="74"/>
    </location>
</feature>
<feature type="domain" description="FAD-binding PCMH-type" evidence="2">
    <location>
        <begin position="108"/>
        <end position="279"/>
    </location>
</feature>
<feature type="region of interest" description="Disordered" evidence="3">
    <location>
        <begin position="16"/>
        <end position="51"/>
    </location>
</feature>
<feature type="compositionally biased region" description="Pro residues" evidence="3">
    <location>
        <begin position="34"/>
        <end position="46"/>
    </location>
</feature>
<accession>O47881</accession>
<proteinExistence type="evidence at protein level"/>